<name>MTNN_BACP2</name>
<sequence>MKIAVIGAMEEEVTILRDQLKNATQENIAGCEFTTGVYEDKEVILLKSGIGKVNAAVSTTLLLDRFQPDYVINTGSAGGFHHTLNVGDIVISTDVRHHDVDVTIFNYEYGQVPGLPAAFVADEKLVKLAEESALEIDHIQVAKGTIATGDSFMNDPNRVAFVREKFPELYAVEMEAAAVAQVCQLFGTPFVVVRALSDIAGKESNVSFDQFLEQAAIHSTDLVLRMIKQTQ</sequence>
<reference key="1">
    <citation type="journal article" date="2007" name="PLoS ONE">
        <title>Paradoxical DNA repair and peroxide resistance gene conservation in Bacillus pumilus SAFR-032.</title>
        <authorList>
            <person name="Gioia J."/>
            <person name="Yerrapragada S."/>
            <person name="Qin X."/>
            <person name="Jiang H."/>
            <person name="Igboeli O.C."/>
            <person name="Muzny D."/>
            <person name="Dugan-Rocha S."/>
            <person name="Ding Y."/>
            <person name="Hawes A."/>
            <person name="Liu W."/>
            <person name="Perez L."/>
            <person name="Kovar C."/>
            <person name="Dinh H."/>
            <person name="Lee S."/>
            <person name="Nazareth L."/>
            <person name="Blyth P."/>
            <person name="Holder M."/>
            <person name="Buhay C."/>
            <person name="Tirumalai M.R."/>
            <person name="Liu Y."/>
            <person name="Dasgupta I."/>
            <person name="Bokhetache L."/>
            <person name="Fujita M."/>
            <person name="Karouia F."/>
            <person name="Eswara Moorthy P."/>
            <person name="Siefert J."/>
            <person name="Uzman A."/>
            <person name="Buzumbo P."/>
            <person name="Verma A."/>
            <person name="Zwiya H."/>
            <person name="McWilliams B.D."/>
            <person name="Olowu A."/>
            <person name="Clinkenbeard K.D."/>
            <person name="Newcombe D."/>
            <person name="Golebiewski L."/>
            <person name="Petrosino J.F."/>
            <person name="Nicholson W.L."/>
            <person name="Fox G.E."/>
            <person name="Venkateswaran K."/>
            <person name="Highlander S.K."/>
            <person name="Weinstock G.M."/>
        </authorList>
    </citation>
    <scope>NUCLEOTIDE SEQUENCE [LARGE SCALE GENOMIC DNA]</scope>
    <source>
        <strain>SAFR-032</strain>
    </source>
</reference>
<accession>A8FFL1</accession>
<dbReference type="EC" id="3.2.2.9" evidence="1"/>
<dbReference type="EMBL" id="CP000813">
    <property type="protein sequence ID" value="ABV63028.1"/>
    <property type="molecule type" value="Genomic_DNA"/>
</dbReference>
<dbReference type="RefSeq" id="WP_012010702.1">
    <property type="nucleotide sequence ID" value="NZ_VEIS01000017.1"/>
</dbReference>
<dbReference type="SMR" id="A8FFL1"/>
<dbReference type="STRING" id="315750.BPUM_2362"/>
<dbReference type="GeneID" id="5621624"/>
<dbReference type="KEGG" id="bpu:BPUM_2362"/>
<dbReference type="eggNOG" id="COG0775">
    <property type="taxonomic scope" value="Bacteria"/>
</dbReference>
<dbReference type="HOGENOM" id="CLU_031248_2_2_9"/>
<dbReference type="OrthoDB" id="9792278at2"/>
<dbReference type="UniPathway" id="UPA00904">
    <property type="reaction ID" value="UER00871"/>
</dbReference>
<dbReference type="Proteomes" id="UP000001355">
    <property type="component" value="Chromosome"/>
</dbReference>
<dbReference type="GO" id="GO:0005829">
    <property type="term" value="C:cytosol"/>
    <property type="evidence" value="ECO:0007669"/>
    <property type="project" value="TreeGrafter"/>
</dbReference>
<dbReference type="GO" id="GO:0008782">
    <property type="term" value="F:adenosylhomocysteine nucleosidase activity"/>
    <property type="evidence" value="ECO:0007669"/>
    <property type="project" value="UniProtKB-UniRule"/>
</dbReference>
<dbReference type="GO" id="GO:0008930">
    <property type="term" value="F:methylthioadenosine nucleosidase activity"/>
    <property type="evidence" value="ECO:0007669"/>
    <property type="project" value="UniProtKB-UniRule"/>
</dbReference>
<dbReference type="GO" id="GO:0019509">
    <property type="term" value="P:L-methionine salvage from methylthioadenosine"/>
    <property type="evidence" value="ECO:0007669"/>
    <property type="project" value="UniProtKB-UniRule"/>
</dbReference>
<dbReference type="GO" id="GO:0019284">
    <property type="term" value="P:L-methionine salvage from S-adenosylmethionine"/>
    <property type="evidence" value="ECO:0007669"/>
    <property type="project" value="TreeGrafter"/>
</dbReference>
<dbReference type="GO" id="GO:0009164">
    <property type="term" value="P:nucleoside catabolic process"/>
    <property type="evidence" value="ECO:0007669"/>
    <property type="project" value="InterPro"/>
</dbReference>
<dbReference type="CDD" id="cd09008">
    <property type="entry name" value="MTAN"/>
    <property type="match status" value="1"/>
</dbReference>
<dbReference type="FunFam" id="3.40.50.1580:FF:000001">
    <property type="entry name" value="MTA/SAH nucleosidase family protein"/>
    <property type="match status" value="1"/>
</dbReference>
<dbReference type="Gene3D" id="3.40.50.1580">
    <property type="entry name" value="Nucleoside phosphorylase domain"/>
    <property type="match status" value="1"/>
</dbReference>
<dbReference type="HAMAP" id="MF_01684">
    <property type="entry name" value="Salvage_MtnN"/>
    <property type="match status" value="1"/>
</dbReference>
<dbReference type="InterPro" id="IPR010049">
    <property type="entry name" value="MTA_SAH_Nsdase"/>
</dbReference>
<dbReference type="InterPro" id="IPR000845">
    <property type="entry name" value="Nucleoside_phosphorylase_d"/>
</dbReference>
<dbReference type="InterPro" id="IPR035994">
    <property type="entry name" value="Nucleoside_phosphorylase_sf"/>
</dbReference>
<dbReference type="NCBIfam" id="TIGR01704">
    <property type="entry name" value="MTA_SAH-Nsdase"/>
    <property type="match status" value="1"/>
</dbReference>
<dbReference type="NCBIfam" id="NF004079">
    <property type="entry name" value="PRK05584.1"/>
    <property type="match status" value="1"/>
</dbReference>
<dbReference type="PANTHER" id="PTHR46832">
    <property type="entry name" value="5'-METHYLTHIOADENOSINE/S-ADENOSYLHOMOCYSTEINE NUCLEOSIDASE"/>
    <property type="match status" value="1"/>
</dbReference>
<dbReference type="PANTHER" id="PTHR46832:SF1">
    <property type="entry name" value="5'-METHYLTHIOADENOSINE_S-ADENOSYLHOMOCYSTEINE NUCLEOSIDASE"/>
    <property type="match status" value="1"/>
</dbReference>
<dbReference type="Pfam" id="PF01048">
    <property type="entry name" value="PNP_UDP_1"/>
    <property type="match status" value="1"/>
</dbReference>
<dbReference type="SUPFAM" id="SSF53167">
    <property type="entry name" value="Purine and uridine phosphorylases"/>
    <property type="match status" value="1"/>
</dbReference>
<organism>
    <name type="scientific">Bacillus pumilus (strain SAFR-032)</name>
    <dbReference type="NCBI Taxonomy" id="315750"/>
    <lineage>
        <taxon>Bacteria</taxon>
        <taxon>Bacillati</taxon>
        <taxon>Bacillota</taxon>
        <taxon>Bacilli</taxon>
        <taxon>Bacillales</taxon>
        <taxon>Bacillaceae</taxon>
        <taxon>Bacillus</taxon>
    </lineage>
</organism>
<evidence type="ECO:0000255" key="1">
    <source>
        <dbReference type="HAMAP-Rule" id="MF_01684"/>
    </source>
</evidence>
<comment type="function">
    <text evidence="1">Catalyzes the irreversible cleavage of the glycosidic bond in both 5'-methylthioadenosine (MTA) and S-adenosylhomocysteine (SAH/AdoHcy) to adenine and the corresponding thioribose, 5'-methylthioribose and S-ribosylhomocysteine, respectively. Also cleaves 5'-deoxyadenosine, a toxic by-product of radical S-adenosylmethionine (SAM) enzymes, into 5-deoxyribose and adenine.</text>
</comment>
<comment type="catalytic activity">
    <reaction evidence="1">
        <text>S-adenosyl-L-homocysteine + H2O = S-(5-deoxy-D-ribos-5-yl)-L-homocysteine + adenine</text>
        <dbReference type="Rhea" id="RHEA:17805"/>
        <dbReference type="ChEBI" id="CHEBI:15377"/>
        <dbReference type="ChEBI" id="CHEBI:16708"/>
        <dbReference type="ChEBI" id="CHEBI:57856"/>
        <dbReference type="ChEBI" id="CHEBI:58195"/>
        <dbReference type="EC" id="3.2.2.9"/>
    </reaction>
</comment>
<comment type="catalytic activity">
    <reaction evidence="1">
        <text>S-methyl-5'-thioadenosine + H2O = 5-(methylsulfanyl)-D-ribose + adenine</text>
        <dbReference type="Rhea" id="RHEA:13617"/>
        <dbReference type="ChEBI" id="CHEBI:15377"/>
        <dbReference type="ChEBI" id="CHEBI:16708"/>
        <dbReference type="ChEBI" id="CHEBI:17509"/>
        <dbReference type="ChEBI" id="CHEBI:78440"/>
        <dbReference type="EC" id="3.2.2.9"/>
    </reaction>
</comment>
<comment type="catalytic activity">
    <reaction evidence="1">
        <text>5'-deoxyadenosine + H2O = 5-deoxy-D-ribose + adenine</text>
        <dbReference type="Rhea" id="RHEA:29859"/>
        <dbReference type="ChEBI" id="CHEBI:15377"/>
        <dbReference type="ChEBI" id="CHEBI:16708"/>
        <dbReference type="ChEBI" id="CHEBI:17319"/>
        <dbReference type="ChEBI" id="CHEBI:149540"/>
        <dbReference type="EC" id="3.2.2.9"/>
    </reaction>
    <physiologicalReaction direction="left-to-right" evidence="1">
        <dbReference type="Rhea" id="RHEA:29860"/>
    </physiologicalReaction>
</comment>
<comment type="pathway">
    <text evidence="1">Amino-acid biosynthesis; L-methionine biosynthesis via salvage pathway; S-methyl-5-thio-alpha-D-ribose 1-phosphate from S-methyl-5'-thioadenosine (hydrolase route): step 1/2.</text>
</comment>
<comment type="similarity">
    <text evidence="1">Belongs to the PNP/UDP phosphorylase family. MtnN subfamily.</text>
</comment>
<keyword id="KW-0028">Amino-acid biosynthesis</keyword>
<keyword id="KW-0378">Hydrolase</keyword>
<keyword id="KW-0486">Methionine biosynthesis</keyword>
<gene>
    <name evidence="1" type="primary">mtnN</name>
    <name type="ordered locus">BPUM_2362</name>
</gene>
<protein>
    <recommendedName>
        <fullName evidence="1">5'-methylthioadenosine/S-adenosylhomocysteine nucleosidase</fullName>
        <shortName evidence="1">MTA/SAH nucleosidase</shortName>
        <shortName evidence="1">MTAN</shortName>
        <ecNumber evidence="1">3.2.2.9</ecNumber>
    </recommendedName>
    <alternativeName>
        <fullName evidence="1">5'-deoxyadenosine nucleosidase</fullName>
        <shortName evidence="1">DOA nucleosidase</shortName>
        <shortName evidence="1">dAdo nucleosidase</shortName>
    </alternativeName>
    <alternativeName>
        <fullName evidence="1">5'-methylthioadenosine nucleosidase</fullName>
        <shortName evidence="1">MTA nucleosidase</shortName>
    </alternativeName>
    <alternativeName>
        <fullName evidence="1">S-adenosylhomocysteine nucleosidase</fullName>
        <shortName evidence="1">AdoHcy nucleosidase</shortName>
        <shortName evidence="1">SAH nucleosidase</shortName>
        <shortName evidence="1">SRH nucleosidase</shortName>
    </alternativeName>
</protein>
<proteinExistence type="inferred from homology"/>
<feature type="chain" id="PRO_0000359280" description="5'-methylthioadenosine/S-adenosylhomocysteine nucleosidase">
    <location>
        <begin position="1"/>
        <end position="231"/>
    </location>
</feature>
<feature type="active site" description="Proton acceptor" evidence="1">
    <location>
        <position position="12"/>
    </location>
</feature>
<feature type="active site" description="Proton donor" evidence="1">
    <location>
        <position position="198"/>
    </location>
</feature>
<feature type="binding site" evidence="1">
    <location>
        <position position="78"/>
    </location>
    <ligand>
        <name>substrate</name>
    </ligand>
</feature>
<feature type="binding site" evidence="1">
    <location>
        <position position="153"/>
    </location>
    <ligand>
        <name>substrate</name>
    </ligand>
</feature>
<feature type="binding site" evidence="1">
    <location>
        <begin position="174"/>
        <end position="175"/>
    </location>
    <ligand>
        <name>substrate</name>
    </ligand>
</feature>